<evidence type="ECO:0000250" key="1"/>
<evidence type="ECO:0000305" key="2"/>
<accession>Q8YXZ4</accession>
<gene>
    <name type="primary">msrA1</name>
    <name type="ordered locus">all1062</name>
</gene>
<organism>
    <name type="scientific">Nostoc sp. (strain PCC 7120 / SAG 25.82 / UTEX 2576)</name>
    <dbReference type="NCBI Taxonomy" id="103690"/>
    <lineage>
        <taxon>Bacteria</taxon>
        <taxon>Bacillati</taxon>
        <taxon>Cyanobacteriota</taxon>
        <taxon>Cyanophyceae</taxon>
        <taxon>Nostocales</taxon>
        <taxon>Nostocaceae</taxon>
        <taxon>Nostoc</taxon>
    </lineage>
</organism>
<reference key="1">
    <citation type="journal article" date="2001" name="DNA Res.">
        <title>Complete genomic sequence of the filamentous nitrogen-fixing cyanobacterium Anabaena sp. strain PCC 7120.</title>
        <authorList>
            <person name="Kaneko T."/>
            <person name="Nakamura Y."/>
            <person name="Wolk C.P."/>
            <person name="Kuritz T."/>
            <person name="Sasamoto S."/>
            <person name="Watanabe A."/>
            <person name="Iriguchi M."/>
            <person name="Ishikawa A."/>
            <person name="Kawashima K."/>
            <person name="Kimura T."/>
            <person name="Kishida Y."/>
            <person name="Kohara M."/>
            <person name="Matsumoto M."/>
            <person name="Matsuno A."/>
            <person name="Muraki A."/>
            <person name="Nakazaki N."/>
            <person name="Shimpo S."/>
            <person name="Sugimoto M."/>
            <person name="Takazawa M."/>
            <person name="Yamada M."/>
            <person name="Yasuda M."/>
            <person name="Tabata S."/>
        </authorList>
    </citation>
    <scope>NUCLEOTIDE SEQUENCE [LARGE SCALE GENOMIC DNA]</scope>
    <source>
        <strain>PCC 7120 / SAG 25.82 / UTEX 2576</strain>
    </source>
</reference>
<name>MSRA1_NOSS1</name>
<protein>
    <recommendedName>
        <fullName>Peptide methionine sulfoxide reductase MsrA 1</fullName>
        <shortName>Protein-methionine-S-oxide reductase 1</shortName>
        <ecNumber>1.8.4.11</ecNumber>
    </recommendedName>
    <alternativeName>
        <fullName>Peptide-methionine (S)-S-oxide reductase 1</fullName>
        <shortName>Peptide Met(O) reductase 1</shortName>
    </alternativeName>
</protein>
<proteinExistence type="inferred from homology"/>
<dbReference type="EC" id="1.8.4.11"/>
<dbReference type="EMBL" id="BA000019">
    <property type="protein sequence ID" value="BAB73019.1"/>
    <property type="molecule type" value="Genomic_DNA"/>
</dbReference>
<dbReference type="PIR" id="AC1939">
    <property type="entry name" value="AC1939"/>
</dbReference>
<dbReference type="SMR" id="Q8YXZ4"/>
<dbReference type="STRING" id="103690.gene:10493076"/>
<dbReference type="KEGG" id="ana:all1062"/>
<dbReference type="eggNOG" id="COG0225">
    <property type="taxonomic scope" value="Bacteria"/>
</dbReference>
<dbReference type="Proteomes" id="UP000002483">
    <property type="component" value="Chromosome"/>
</dbReference>
<dbReference type="GO" id="GO:0033744">
    <property type="term" value="F:L-methionine:thioredoxin-disulfide S-oxidoreductase activity"/>
    <property type="evidence" value="ECO:0007669"/>
    <property type="project" value="RHEA"/>
</dbReference>
<dbReference type="GO" id="GO:0008113">
    <property type="term" value="F:peptide-methionine (S)-S-oxide reductase activity"/>
    <property type="evidence" value="ECO:0007669"/>
    <property type="project" value="UniProtKB-UniRule"/>
</dbReference>
<dbReference type="GO" id="GO:0036211">
    <property type="term" value="P:protein modification process"/>
    <property type="evidence" value="ECO:0007669"/>
    <property type="project" value="UniProtKB-UniRule"/>
</dbReference>
<dbReference type="Gene3D" id="3.30.1060.10">
    <property type="entry name" value="Peptide methionine sulphoxide reductase MsrA"/>
    <property type="match status" value="1"/>
</dbReference>
<dbReference type="HAMAP" id="MF_01401">
    <property type="entry name" value="MsrA"/>
    <property type="match status" value="1"/>
</dbReference>
<dbReference type="InterPro" id="IPR002569">
    <property type="entry name" value="Met_Sox_Rdtase_MsrA_dom"/>
</dbReference>
<dbReference type="InterPro" id="IPR036509">
    <property type="entry name" value="Met_Sox_Rdtase_MsrA_sf"/>
</dbReference>
<dbReference type="NCBIfam" id="TIGR00401">
    <property type="entry name" value="msrA"/>
    <property type="match status" value="1"/>
</dbReference>
<dbReference type="PANTHER" id="PTHR43774">
    <property type="entry name" value="PEPTIDE METHIONINE SULFOXIDE REDUCTASE"/>
    <property type="match status" value="1"/>
</dbReference>
<dbReference type="PANTHER" id="PTHR43774:SF1">
    <property type="entry name" value="PEPTIDE METHIONINE SULFOXIDE REDUCTASE MSRA 2"/>
    <property type="match status" value="1"/>
</dbReference>
<dbReference type="Pfam" id="PF01625">
    <property type="entry name" value="PMSR"/>
    <property type="match status" value="1"/>
</dbReference>
<dbReference type="SUPFAM" id="SSF55068">
    <property type="entry name" value="Peptide methionine sulfoxide reductase"/>
    <property type="match status" value="1"/>
</dbReference>
<sequence length="163" mass="18524">MELKIGSTEAPMEKATFGAGCFWGVEAAFRKVKGVVSTSVGYMGGHFPNPCYLDVLSRITGHAEVVQIEYDPQLVSYEDLLAVFWDIHDPTTLNRQGPDKGEQYRSVIFFHNEQQAEAAQQSKAKVQVSGRFELDIVTEIKHKSEYYLATEEHQQYFEKQAKR</sequence>
<comment type="function">
    <text evidence="1">Has an important function as a repair enzyme for proteins that have been inactivated by oxidation. Catalyzes the reversible oxidation-reduction of methionine sulfoxide in proteins to methionine (By similarity).</text>
</comment>
<comment type="catalytic activity">
    <reaction>
        <text>L-methionyl-[protein] + [thioredoxin]-disulfide + H2O = L-methionyl-(S)-S-oxide-[protein] + [thioredoxin]-dithiol</text>
        <dbReference type="Rhea" id="RHEA:14217"/>
        <dbReference type="Rhea" id="RHEA-COMP:10698"/>
        <dbReference type="Rhea" id="RHEA-COMP:10700"/>
        <dbReference type="Rhea" id="RHEA-COMP:12313"/>
        <dbReference type="Rhea" id="RHEA-COMP:12315"/>
        <dbReference type="ChEBI" id="CHEBI:15377"/>
        <dbReference type="ChEBI" id="CHEBI:16044"/>
        <dbReference type="ChEBI" id="CHEBI:29950"/>
        <dbReference type="ChEBI" id="CHEBI:44120"/>
        <dbReference type="ChEBI" id="CHEBI:50058"/>
        <dbReference type="EC" id="1.8.4.11"/>
    </reaction>
</comment>
<comment type="catalytic activity">
    <reaction>
        <text>[thioredoxin]-disulfide + L-methionine + H2O = L-methionine (S)-S-oxide + [thioredoxin]-dithiol</text>
        <dbReference type="Rhea" id="RHEA:19993"/>
        <dbReference type="Rhea" id="RHEA-COMP:10698"/>
        <dbReference type="Rhea" id="RHEA-COMP:10700"/>
        <dbReference type="ChEBI" id="CHEBI:15377"/>
        <dbReference type="ChEBI" id="CHEBI:29950"/>
        <dbReference type="ChEBI" id="CHEBI:50058"/>
        <dbReference type="ChEBI" id="CHEBI:57844"/>
        <dbReference type="ChEBI" id="CHEBI:58772"/>
        <dbReference type="EC" id="1.8.4.11"/>
    </reaction>
</comment>
<comment type="similarity">
    <text evidence="2">Belongs to the MsrA Met sulfoxide reductase family.</text>
</comment>
<keyword id="KW-0560">Oxidoreductase</keyword>
<keyword id="KW-1185">Reference proteome</keyword>
<feature type="chain" id="PRO_0000138527" description="Peptide methionine sulfoxide reductase MsrA 1">
    <location>
        <begin position="1"/>
        <end position="163"/>
    </location>
</feature>
<feature type="active site" evidence="1">
    <location>
        <position position="21"/>
    </location>
</feature>